<organism>
    <name type="scientific">Streptococcus pneumoniae (strain ATCC 700669 / Spain 23F-1)</name>
    <dbReference type="NCBI Taxonomy" id="561276"/>
    <lineage>
        <taxon>Bacteria</taxon>
        <taxon>Bacillati</taxon>
        <taxon>Bacillota</taxon>
        <taxon>Bacilli</taxon>
        <taxon>Lactobacillales</taxon>
        <taxon>Streptococcaceae</taxon>
        <taxon>Streptococcus</taxon>
    </lineage>
</organism>
<feature type="chain" id="PRO_1000185398" description="Galactose-6-phosphate isomerase subunit LacA">
    <location>
        <begin position="1"/>
        <end position="141"/>
    </location>
</feature>
<proteinExistence type="inferred from homology"/>
<protein>
    <recommendedName>
        <fullName evidence="1">Galactose-6-phosphate isomerase subunit LacA</fullName>
        <ecNumber evidence="1">5.3.1.26</ecNumber>
    </recommendedName>
</protein>
<sequence length="141" mass="15234">MSIVIGADAAGLRLKEVVKDFLEKENFHLVDVTAEGQDFVDVTLAVAAEVNKEEQNLGIVIDAYGAGSFMVATKIKGMVAAEVSDERSAYMTRGHNNSRMITMGAQLVGDELAKNIAKGFVNGKYDGGRHQIRVDMLNKMG</sequence>
<accession>B8ZQ66</accession>
<reference key="1">
    <citation type="journal article" date="2009" name="J. Bacteriol.">
        <title>Role of conjugative elements in the evolution of the multidrug-resistant pandemic clone Streptococcus pneumoniae Spain23F ST81.</title>
        <authorList>
            <person name="Croucher N.J."/>
            <person name="Walker D."/>
            <person name="Romero P."/>
            <person name="Lennard N."/>
            <person name="Paterson G.K."/>
            <person name="Bason N.C."/>
            <person name="Mitchell A.M."/>
            <person name="Quail M.A."/>
            <person name="Andrew P.W."/>
            <person name="Parkhill J."/>
            <person name="Bentley S.D."/>
            <person name="Mitchell T.J."/>
        </authorList>
    </citation>
    <scope>NUCLEOTIDE SEQUENCE [LARGE SCALE GENOMIC DNA]</scope>
    <source>
        <strain>ATCC 700669 / Spain 23F-1</strain>
    </source>
</reference>
<gene>
    <name evidence="1" type="primary">lacA</name>
    <name type="ordered locus">SPN23F10920</name>
</gene>
<dbReference type="EC" id="5.3.1.26" evidence="1"/>
<dbReference type="EMBL" id="FM211187">
    <property type="protein sequence ID" value="CAR68905.1"/>
    <property type="molecule type" value="Genomic_DNA"/>
</dbReference>
<dbReference type="RefSeq" id="WP_000029274.1">
    <property type="nucleotide sequence ID" value="NC_011900.1"/>
</dbReference>
<dbReference type="SMR" id="B8ZQ66"/>
<dbReference type="KEGG" id="sne:SPN23F10920"/>
<dbReference type="HOGENOM" id="CLU_091396_4_2_9"/>
<dbReference type="UniPathway" id="UPA00702">
    <property type="reaction ID" value="UER00714"/>
</dbReference>
<dbReference type="GO" id="GO:0050044">
    <property type="term" value="F:galactose-6-phosphate isomerase activity"/>
    <property type="evidence" value="ECO:0007669"/>
    <property type="project" value="UniProtKB-UniRule"/>
</dbReference>
<dbReference type="GO" id="GO:0004751">
    <property type="term" value="F:ribose-5-phosphate isomerase activity"/>
    <property type="evidence" value="ECO:0007669"/>
    <property type="project" value="TreeGrafter"/>
</dbReference>
<dbReference type="GO" id="GO:0019316">
    <property type="term" value="P:D-allose catabolic process"/>
    <property type="evidence" value="ECO:0007669"/>
    <property type="project" value="TreeGrafter"/>
</dbReference>
<dbReference type="GO" id="GO:0019388">
    <property type="term" value="P:galactose catabolic process"/>
    <property type="evidence" value="ECO:0007669"/>
    <property type="project" value="UniProtKB-UniPathway"/>
</dbReference>
<dbReference type="GO" id="GO:0019512">
    <property type="term" value="P:lactose catabolic process via tagatose-6-phosphate"/>
    <property type="evidence" value="ECO:0007669"/>
    <property type="project" value="UniProtKB-UniRule"/>
</dbReference>
<dbReference type="GO" id="GO:0009052">
    <property type="term" value="P:pentose-phosphate shunt, non-oxidative branch"/>
    <property type="evidence" value="ECO:0007669"/>
    <property type="project" value="TreeGrafter"/>
</dbReference>
<dbReference type="Gene3D" id="3.40.1400.10">
    <property type="entry name" value="Sugar-phosphate isomerase, RpiB/LacA/LacB"/>
    <property type="match status" value="1"/>
</dbReference>
<dbReference type="HAMAP" id="MF_01555">
    <property type="entry name" value="LacA"/>
    <property type="match status" value="1"/>
</dbReference>
<dbReference type="InterPro" id="IPR004783">
    <property type="entry name" value="LacA"/>
</dbReference>
<dbReference type="InterPro" id="IPR003500">
    <property type="entry name" value="RpiB_LacA_LacB"/>
</dbReference>
<dbReference type="InterPro" id="IPR036569">
    <property type="entry name" value="RpiB_LacA_LacB_sf"/>
</dbReference>
<dbReference type="NCBIfam" id="TIGR01118">
    <property type="entry name" value="lacA"/>
    <property type="match status" value="1"/>
</dbReference>
<dbReference type="NCBIfam" id="NF006380">
    <property type="entry name" value="PRK08621.1"/>
    <property type="match status" value="1"/>
</dbReference>
<dbReference type="NCBIfam" id="NF009257">
    <property type="entry name" value="PRK12613.1"/>
    <property type="match status" value="1"/>
</dbReference>
<dbReference type="NCBIfam" id="TIGR00689">
    <property type="entry name" value="rpiB_lacA_lacB"/>
    <property type="match status" value="1"/>
</dbReference>
<dbReference type="PANTHER" id="PTHR30345:SF5">
    <property type="entry name" value="GALACTOSE-6-PHOSPHATE ISOMERASE SUBUNIT LACA"/>
    <property type="match status" value="1"/>
</dbReference>
<dbReference type="PANTHER" id="PTHR30345">
    <property type="entry name" value="RIBOSE-5-PHOSPHATE ISOMERASE B"/>
    <property type="match status" value="1"/>
</dbReference>
<dbReference type="Pfam" id="PF02502">
    <property type="entry name" value="LacAB_rpiB"/>
    <property type="match status" value="1"/>
</dbReference>
<dbReference type="PIRSF" id="PIRSF005384">
    <property type="entry name" value="RpiB_LacA_B"/>
    <property type="match status" value="1"/>
</dbReference>
<dbReference type="SUPFAM" id="SSF89623">
    <property type="entry name" value="Ribose/Galactose isomerase RpiB/AlsB"/>
    <property type="match status" value="1"/>
</dbReference>
<comment type="catalytic activity">
    <reaction evidence="1">
        <text>aldehydo-D-galactose 6-phosphate = keto-D-tagatose 6-phosphate</text>
        <dbReference type="Rhea" id="RHEA:13033"/>
        <dbReference type="ChEBI" id="CHEBI:58255"/>
        <dbReference type="ChEBI" id="CHEBI:134283"/>
        <dbReference type="EC" id="5.3.1.26"/>
    </reaction>
</comment>
<comment type="pathway">
    <text evidence="1">Carbohydrate metabolism; D-galactose 6-phosphate degradation; D-tagatose 6-phosphate from D-galactose 6-phosphate: step 1/1.</text>
</comment>
<comment type="subunit">
    <text evidence="1">Heteromultimeric protein consisting of LacA and LacB.</text>
</comment>
<comment type="similarity">
    <text evidence="1">Belongs to the LacAB/RpiB family.</text>
</comment>
<keyword id="KW-0413">Isomerase</keyword>
<keyword id="KW-0423">Lactose metabolism</keyword>
<evidence type="ECO:0000255" key="1">
    <source>
        <dbReference type="HAMAP-Rule" id="MF_01555"/>
    </source>
</evidence>
<name>LACA_STRPJ</name>